<feature type="chain" id="PRO_1000081222" description="Ubiquinone biosynthesis O-methyltransferase">
    <location>
        <begin position="1"/>
        <end position="238"/>
    </location>
</feature>
<feature type="binding site" evidence="1">
    <location>
        <position position="40"/>
    </location>
    <ligand>
        <name>S-adenosyl-L-methionine</name>
        <dbReference type="ChEBI" id="CHEBI:59789"/>
    </ligand>
</feature>
<feature type="binding site" evidence="1">
    <location>
        <position position="59"/>
    </location>
    <ligand>
        <name>S-adenosyl-L-methionine</name>
        <dbReference type="ChEBI" id="CHEBI:59789"/>
    </ligand>
</feature>
<feature type="binding site" evidence="1">
    <location>
        <position position="81"/>
    </location>
    <ligand>
        <name>S-adenosyl-L-methionine</name>
        <dbReference type="ChEBI" id="CHEBI:59789"/>
    </ligand>
</feature>
<feature type="binding site" evidence="1">
    <location>
        <position position="126"/>
    </location>
    <ligand>
        <name>S-adenosyl-L-methionine</name>
        <dbReference type="ChEBI" id="CHEBI:59789"/>
    </ligand>
</feature>
<dbReference type="EC" id="2.1.1.222" evidence="1"/>
<dbReference type="EC" id="2.1.1.64" evidence="1"/>
<dbReference type="EMBL" id="CP000381">
    <property type="protein sequence ID" value="ABX72385.1"/>
    <property type="molecule type" value="Genomic_DNA"/>
</dbReference>
<dbReference type="SMR" id="A9M0C4"/>
<dbReference type="KEGG" id="nmn:NMCC_0169"/>
<dbReference type="HOGENOM" id="CLU_042432_5_0_4"/>
<dbReference type="UniPathway" id="UPA00232"/>
<dbReference type="Proteomes" id="UP000001177">
    <property type="component" value="Chromosome"/>
</dbReference>
<dbReference type="GO" id="GO:0102208">
    <property type="term" value="F:2-polyprenyl-6-hydroxyphenol methylase activity"/>
    <property type="evidence" value="ECO:0007669"/>
    <property type="project" value="UniProtKB-EC"/>
</dbReference>
<dbReference type="GO" id="GO:0061542">
    <property type="term" value="F:3-demethylubiquinol 3-O-methyltransferase activity"/>
    <property type="evidence" value="ECO:0007669"/>
    <property type="project" value="UniProtKB-UniRule"/>
</dbReference>
<dbReference type="GO" id="GO:0010420">
    <property type="term" value="F:polyprenyldihydroxybenzoate methyltransferase activity"/>
    <property type="evidence" value="ECO:0007669"/>
    <property type="project" value="InterPro"/>
</dbReference>
<dbReference type="GO" id="GO:0032259">
    <property type="term" value="P:methylation"/>
    <property type="evidence" value="ECO:0007669"/>
    <property type="project" value="UniProtKB-KW"/>
</dbReference>
<dbReference type="CDD" id="cd02440">
    <property type="entry name" value="AdoMet_MTases"/>
    <property type="match status" value="1"/>
</dbReference>
<dbReference type="FunFam" id="3.40.50.150:FF:000028">
    <property type="entry name" value="Ubiquinone biosynthesis O-methyltransferase"/>
    <property type="match status" value="1"/>
</dbReference>
<dbReference type="Gene3D" id="3.40.50.150">
    <property type="entry name" value="Vaccinia Virus protein VP39"/>
    <property type="match status" value="1"/>
</dbReference>
<dbReference type="HAMAP" id="MF_00472">
    <property type="entry name" value="UbiG"/>
    <property type="match status" value="1"/>
</dbReference>
<dbReference type="InterPro" id="IPR029063">
    <property type="entry name" value="SAM-dependent_MTases_sf"/>
</dbReference>
<dbReference type="InterPro" id="IPR010233">
    <property type="entry name" value="UbiG_MeTrfase"/>
</dbReference>
<dbReference type="NCBIfam" id="TIGR01983">
    <property type="entry name" value="UbiG"/>
    <property type="match status" value="1"/>
</dbReference>
<dbReference type="PANTHER" id="PTHR43464">
    <property type="entry name" value="METHYLTRANSFERASE"/>
    <property type="match status" value="1"/>
</dbReference>
<dbReference type="PANTHER" id="PTHR43464:SF19">
    <property type="entry name" value="UBIQUINONE BIOSYNTHESIS O-METHYLTRANSFERASE, MITOCHONDRIAL"/>
    <property type="match status" value="1"/>
</dbReference>
<dbReference type="Pfam" id="PF13489">
    <property type="entry name" value="Methyltransf_23"/>
    <property type="match status" value="1"/>
</dbReference>
<dbReference type="SUPFAM" id="SSF53335">
    <property type="entry name" value="S-adenosyl-L-methionine-dependent methyltransferases"/>
    <property type="match status" value="1"/>
</dbReference>
<evidence type="ECO:0000255" key="1">
    <source>
        <dbReference type="HAMAP-Rule" id="MF_00472"/>
    </source>
</evidence>
<protein>
    <recommendedName>
        <fullName evidence="1">Ubiquinone biosynthesis O-methyltransferase</fullName>
    </recommendedName>
    <alternativeName>
        <fullName evidence="1">2-polyprenyl-6-hydroxyphenol methylase</fullName>
        <ecNumber evidence="1">2.1.1.222</ecNumber>
    </alternativeName>
    <alternativeName>
        <fullName evidence="1">3-demethylubiquinone 3-O-methyltransferase</fullName>
        <ecNumber evidence="1">2.1.1.64</ecNumber>
    </alternativeName>
</protein>
<keyword id="KW-0489">Methyltransferase</keyword>
<keyword id="KW-0949">S-adenosyl-L-methionine</keyword>
<keyword id="KW-0808">Transferase</keyword>
<keyword id="KW-0831">Ubiquinone biosynthesis</keyword>
<accession>A9M0C4</accession>
<gene>
    <name evidence="1" type="primary">ubiG</name>
    <name type="ordered locus">NMCC_0169</name>
</gene>
<sequence length="238" mass="26583">MSDKKYNVDEGEIAKFSRIADKWWDKSGEFKTLHDINPLRLDYIDGHADLRGKRVLDVGCGGGILAESMARRGAAFVKGIDMAEQSLETARLHAALNNVADIEYECIRVEDLAEAEPHSFDVVTCMEMMEHVPDPAAIVRACANLVKPDGMVFFSTINKNPKSYLHLIVAAEYLLKFVPKGTHDWKKFIAPAELARMCRQAGLDVADTKGMTYHVLSQTYALCDSTDVNYMFACRPAF</sequence>
<proteinExistence type="inferred from homology"/>
<reference key="1">
    <citation type="journal article" date="2008" name="Genomics">
        <title>Characterization of ST-4821 complex, a unique Neisseria meningitidis clone.</title>
        <authorList>
            <person name="Peng J."/>
            <person name="Yang L."/>
            <person name="Yang F."/>
            <person name="Yang J."/>
            <person name="Yan Y."/>
            <person name="Nie H."/>
            <person name="Zhang X."/>
            <person name="Xiong Z."/>
            <person name="Jiang Y."/>
            <person name="Cheng F."/>
            <person name="Xu X."/>
            <person name="Chen S."/>
            <person name="Sun L."/>
            <person name="Li W."/>
            <person name="Shen Y."/>
            <person name="Shao Z."/>
            <person name="Liang X."/>
            <person name="Xu J."/>
            <person name="Jin Q."/>
        </authorList>
    </citation>
    <scope>NUCLEOTIDE SEQUENCE [LARGE SCALE GENOMIC DNA]</scope>
    <source>
        <strain>053442</strain>
    </source>
</reference>
<comment type="function">
    <text evidence="1">O-methyltransferase that catalyzes the 2 O-methylation steps in the ubiquinone biosynthetic pathway.</text>
</comment>
<comment type="catalytic activity">
    <reaction evidence="1">
        <text>a 3-demethylubiquinol + S-adenosyl-L-methionine = a ubiquinol + S-adenosyl-L-homocysteine + H(+)</text>
        <dbReference type="Rhea" id="RHEA:44380"/>
        <dbReference type="Rhea" id="RHEA-COMP:9566"/>
        <dbReference type="Rhea" id="RHEA-COMP:10914"/>
        <dbReference type="ChEBI" id="CHEBI:15378"/>
        <dbReference type="ChEBI" id="CHEBI:17976"/>
        <dbReference type="ChEBI" id="CHEBI:57856"/>
        <dbReference type="ChEBI" id="CHEBI:59789"/>
        <dbReference type="ChEBI" id="CHEBI:84422"/>
        <dbReference type="EC" id="2.1.1.64"/>
    </reaction>
</comment>
<comment type="catalytic activity">
    <reaction evidence="1">
        <text>a 3-(all-trans-polyprenyl)benzene-1,2-diol + S-adenosyl-L-methionine = a 2-methoxy-6-(all-trans-polyprenyl)phenol + S-adenosyl-L-homocysteine + H(+)</text>
        <dbReference type="Rhea" id="RHEA:31411"/>
        <dbReference type="Rhea" id="RHEA-COMP:9550"/>
        <dbReference type="Rhea" id="RHEA-COMP:9551"/>
        <dbReference type="ChEBI" id="CHEBI:15378"/>
        <dbReference type="ChEBI" id="CHEBI:57856"/>
        <dbReference type="ChEBI" id="CHEBI:59789"/>
        <dbReference type="ChEBI" id="CHEBI:62729"/>
        <dbReference type="ChEBI" id="CHEBI:62731"/>
        <dbReference type="EC" id="2.1.1.222"/>
    </reaction>
</comment>
<comment type="pathway">
    <text evidence="1">Cofactor biosynthesis; ubiquinone biosynthesis.</text>
</comment>
<comment type="similarity">
    <text evidence="1">Belongs to the methyltransferase superfamily. UbiG/COQ3 family.</text>
</comment>
<name>UBIG_NEIM0</name>
<organism>
    <name type="scientific">Neisseria meningitidis serogroup C (strain 053442)</name>
    <dbReference type="NCBI Taxonomy" id="374833"/>
    <lineage>
        <taxon>Bacteria</taxon>
        <taxon>Pseudomonadati</taxon>
        <taxon>Pseudomonadota</taxon>
        <taxon>Betaproteobacteria</taxon>
        <taxon>Neisseriales</taxon>
        <taxon>Neisseriaceae</taxon>
        <taxon>Neisseria</taxon>
    </lineage>
</organism>